<organism>
    <name type="scientific">Caenorhabditis elegans</name>
    <dbReference type="NCBI Taxonomy" id="6239"/>
    <lineage>
        <taxon>Eukaryota</taxon>
        <taxon>Metazoa</taxon>
        <taxon>Ecdysozoa</taxon>
        <taxon>Nematoda</taxon>
        <taxon>Chromadorea</taxon>
        <taxon>Rhabditida</taxon>
        <taxon>Rhabditina</taxon>
        <taxon>Rhabditomorpha</taxon>
        <taxon>Rhabditoidea</taxon>
        <taxon>Rhabditidae</taxon>
        <taxon>Peloderinae</taxon>
        <taxon>Caenorhabditis</taxon>
    </lineage>
</organism>
<reference key="1">
    <citation type="journal article" date="1998" name="Science">
        <title>Genome sequence of the nematode C. elegans: a platform for investigating biology.</title>
        <authorList>
            <consortium name="The C. elegans sequencing consortium"/>
        </authorList>
    </citation>
    <scope>NUCLEOTIDE SEQUENCE [LARGE SCALE GENOMIC DNA]</scope>
    <source>
        <strain>Bristol N2</strain>
    </source>
</reference>
<reference key="2">
    <citation type="journal article" date="2003" name="Nat. Biotechnol.">
        <title>Lectin affinity capture, isotope-coded tagging and mass spectrometry to identify N-linked glycoproteins.</title>
        <authorList>
            <person name="Kaji H."/>
            <person name="Saito H."/>
            <person name="Yamauchi Y."/>
            <person name="Shinkawa T."/>
            <person name="Taoka M."/>
            <person name="Hirabayashi J."/>
            <person name="Kasai K."/>
            <person name="Takahashi N."/>
            <person name="Isobe T."/>
        </authorList>
    </citation>
    <scope>GLYCOSYLATION [LARGE SCALE ANALYSIS] AT ASN-58</scope>
    <scope>IDENTIFICATION BY MASS SPECTROMETRY</scope>
    <source>
        <strain>Bristol N2</strain>
    </source>
</reference>
<reference key="3">
    <citation type="journal article" date="2007" name="Mol. Cell. Proteomics">
        <title>Proteomics reveals N-linked glycoprotein diversity in Caenorhabditis elegans and suggests an atypical translocation mechanism for integral membrane proteins.</title>
        <authorList>
            <person name="Kaji H."/>
            <person name="Kamiie J."/>
            <person name="Kawakami H."/>
            <person name="Kido K."/>
            <person name="Yamauchi Y."/>
            <person name="Shinkawa T."/>
            <person name="Taoka M."/>
            <person name="Takahashi N."/>
            <person name="Isobe T."/>
        </authorList>
    </citation>
    <scope>GLYCOSYLATION [LARGE SCALE ANALYSIS] AT ASN-58</scope>
    <scope>IDENTIFICATION BY MASS SPECTROMETRY</scope>
    <source>
        <strain>Bristol N2</strain>
    </source>
</reference>
<feature type="signal peptide" evidence="1">
    <location>
        <begin position="1"/>
        <end position="18"/>
    </location>
</feature>
<feature type="chain" id="PRO_0000248523" description="UPF0375 protein ule-4" evidence="4">
    <location>
        <begin position="19"/>
        <end position="111"/>
    </location>
</feature>
<feature type="glycosylation site" description="N-linked (GlcNAc...) asparagine" evidence="1">
    <location>
        <position position="23"/>
    </location>
</feature>
<feature type="glycosylation site" description="N-linked (GlcNAc...) asparagine" evidence="2 3">
    <location>
        <position position="58"/>
    </location>
</feature>
<gene>
    <name evidence="5" type="primary">ule-4</name>
    <name evidence="5" type="ORF">C08F11.11</name>
</gene>
<protein>
    <recommendedName>
        <fullName evidence="4">UPF0375 protein ule-4</fullName>
    </recommendedName>
</protein>
<comment type="subcellular location">
    <subcellularLocation>
        <location evidence="4">Secreted</location>
    </subcellularLocation>
</comment>
<comment type="similarity">
    <text evidence="4">Belongs to the UPF0375 family.</text>
</comment>
<dbReference type="EMBL" id="BX284604">
    <property type="protein sequence ID" value="CAB05678.1"/>
    <property type="molecule type" value="Genomic_DNA"/>
</dbReference>
<dbReference type="PIR" id="T19094">
    <property type="entry name" value="T19094"/>
</dbReference>
<dbReference type="RefSeq" id="NP_502635.1">
    <property type="nucleotide sequence ID" value="NM_070234.7"/>
</dbReference>
<dbReference type="BioGRID" id="43415">
    <property type="interactions" value="2"/>
</dbReference>
<dbReference type="IntAct" id="O62053">
    <property type="interactions" value="1"/>
</dbReference>
<dbReference type="STRING" id="6239.C08F11.11.3"/>
<dbReference type="GlyCosmos" id="O62053">
    <property type="glycosylation" value="2 sites, No reported glycans"/>
</dbReference>
<dbReference type="iPTMnet" id="O62053"/>
<dbReference type="PaxDb" id="6239-C08F11.11.1"/>
<dbReference type="PeptideAtlas" id="O62053"/>
<dbReference type="EnsemblMetazoa" id="C08F11.11.1">
    <property type="protein sequence ID" value="C08F11.11.1"/>
    <property type="gene ID" value="WBGene00007458"/>
</dbReference>
<dbReference type="EnsemblMetazoa" id="C08F11.11.2">
    <property type="protein sequence ID" value="C08F11.11.2"/>
    <property type="gene ID" value="WBGene00007458"/>
</dbReference>
<dbReference type="GeneID" id="178331"/>
<dbReference type="KEGG" id="cel:CELE_C08F11.11"/>
<dbReference type="UCSC" id="C08F11.11">
    <property type="organism name" value="c. elegans"/>
</dbReference>
<dbReference type="AGR" id="WB:WBGene00007458"/>
<dbReference type="CTD" id="178331"/>
<dbReference type="WormBase" id="C08F11.11">
    <property type="protein sequence ID" value="CE17388"/>
    <property type="gene ID" value="WBGene00007458"/>
    <property type="gene designation" value="ule-4"/>
</dbReference>
<dbReference type="GeneTree" id="ENSGT00390000003521"/>
<dbReference type="HOGENOM" id="CLU_2160659_0_0_1"/>
<dbReference type="InParanoid" id="O62053"/>
<dbReference type="PhylomeDB" id="O62053"/>
<dbReference type="PRO" id="PR:O62053"/>
<dbReference type="Proteomes" id="UP000001940">
    <property type="component" value="Chromosome IV"/>
</dbReference>
<dbReference type="Bgee" id="WBGene00007458">
    <property type="expression patterns" value="Expressed in adult organism and 2 other cell types or tissues"/>
</dbReference>
<dbReference type="GO" id="GO:0005576">
    <property type="term" value="C:extracellular region"/>
    <property type="evidence" value="ECO:0007669"/>
    <property type="project" value="UniProtKB-SubCell"/>
</dbReference>
<dbReference type="InterPro" id="IPR009981">
    <property type="entry name" value="DUF1505"/>
</dbReference>
<dbReference type="Pfam" id="PF07403">
    <property type="entry name" value="DUF1505"/>
    <property type="match status" value="1"/>
</dbReference>
<name>ULE4_CAEEL</name>
<accession>O62053</accession>
<keyword id="KW-0325">Glycoprotein</keyword>
<keyword id="KW-1185">Reference proteome</keyword>
<keyword id="KW-0964">Secreted</keyword>
<keyword id="KW-0732">Signal</keyword>
<sequence>MNSRLVLLLAVSVALVSAIAVGNRSSHLKKSKECSSDGHTERCEYTGDLTVKTDSTCNHSTYIMTKVTPPNESPSNGVAHCRTAPCNSEDYADVDCLVAFGADNIAAIEKQ</sequence>
<proteinExistence type="evidence at protein level"/>
<evidence type="ECO:0000255" key="1"/>
<evidence type="ECO:0000269" key="2">
    <source>
    </source>
</evidence>
<evidence type="ECO:0000269" key="3">
    <source>
    </source>
</evidence>
<evidence type="ECO:0000305" key="4"/>
<evidence type="ECO:0000312" key="5">
    <source>
        <dbReference type="WormBase" id="C08F11.11"/>
    </source>
</evidence>